<feature type="chain" id="PRO_0000387701" description="Acetaldehyde dehydrogenase 2">
    <location>
        <begin position="1"/>
        <end position="312"/>
    </location>
</feature>
<feature type="active site" description="Acyl-thioester intermediate" evidence="1">
    <location>
        <position position="129"/>
    </location>
</feature>
<feature type="binding site" evidence="1">
    <location>
        <begin position="11"/>
        <end position="14"/>
    </location>
    <ligand>
        <name>NAD(+)</name>
        <dbReference type="ChEBI" id="CHEBI:57540"/>
    </ligand>
</feature>
<feature type="binding site" evidence="1">
    <location>
        <begin position="160"/>
        <end position="168"/>
    </location>
    <ligand>
        <name>NAD(+)</name>
        <dbReference type="ChEBI" id="CHEBI:57540"/>
    </ligand>
</feature>
<feature type="binding site" evidence="1">
    <location>
        <position position="287"/>
    </location>
    <ligand>
        <name>NAD(+)</name>
        <dbReference type="ChEBI" id="CHEBI:57540"/>
    </ligand>
</feature>
<reference key="1">
    <citation type="submission" date="2007-04" db="EMBL/GenBank/DDBJ databases">
        <title>Complete sequence of plasmid pNL1 of Novosphingobium aromaticivorans DSM 12444.</title>
        <authorList>
            <consortium name="US DOE Joint Genome Institute"/>
            <person name="Copeland A."/>
            <person name="Lucas S."/>
            <person name="Lapidus A."/>
            <person name="Barry K."/>
            <person name="Detter J.C."/>
            <person name="Glavina del Rio T."/>
            <person name="Hammon N."/>
            <person name="Israni S."/>
            <person name="Dalin E."/>
            <person name="Tice H."/>
            <person name="Pitluck S."/>
            <person name="Chertkov O."/>
            <person name="Han C."/>
            <person name="Thomson S."/>
            <person name="Schmutz J."/>
            <person name="Larimer F."/>
            <person name="Land M."/>
            <person name="Kyrpides N."/>
            <person name="Ivanova N."/>
            <person name="Fredrickson J."/>
            <person name="Romine M.F."/>
            <person name="Richardson P."/>
        </authorList>
    </citation>
    <scope>NUCLEOTIDE SEQUENCE [LARGE SCALE GENOMIC DNA]</scope>
    <source>
        <strain>ATCC 700278 / DSM 12444 / CCUG 56034 / CIP 105152 / NBRC 16084 / F199</strain>
    </source>
</reference>
<proteinExistence type="inferred from homology"/>
<name>ACDH2_NOVAD</name>
<geneLocation type="plasmid">
    <name>pNL1</name>
</geneLocation>
<evidence type="ECO:0000255" key="1">
    <source>
        <dbReference type="HAMAP-Rule" id="MF_01657"/>
    </source>
</evidence>
<dbReference type="EC" id="1.2.1.10" evidence="1"/>
<dbReference type="EMBL" id="CP000676">
    <property type="protein sequence ID" value="ABP64098.1"/>
    <property type="molecule type" value="Genomic_DNA"/>
</dbReference>
<dbReference type="RefSeq" id="WP_010891016.1">
    <property type="nucleotide sequence ID" value="NC_009426.1"/>
</dbReference>
<dbReference type="SMR" id="A4XDT7"/>
<dbReference type="KEGG" id="nar:Saro_3853"/>
<dbReference type="HOGENOM" id="CLU_062208_0_0_5"/>
<dbReference type="Proteomes" id="UP000009134">
    <property type="component" value="Plasmid pNL1"/>
</dbReference>
<dbReference type="GO" id="GO:0008774">
    <property type="term" value="F:acetaldehyde dehydrogenase (acetylating) activity"/>
    <property type="evidence" value="ECO:0007669"/>
    <property type="project" value="UniProtKB-UniRule"/>
</dbReference>
<dbReference type="GO" id="GO:0051287">
    <property type="term" value="F:NAD binding"/>
    <property type="evidence" value="ECO:0007669"/>
    <property type="project" value="UniProtKB-UniRule"/>
</dbReference>
<dbReference type="GO" id="GO:0009056">
    <property type="term" value="P:catabolic process"/>
    <property type="evidence" value="ECO:0007669"/>
    <property type="project" value="UniProtKB-KW"/>
</dbReference>
<dbReference type="CDD" id="cd23933">
    <property type="entry name" value="ALDH_C"/>
    <property type="match status" value="1"/>
</dbReference>
<dbReference type="Gene3D" id="3.30.360.10">
    <property type="entry name" value="Dihydrodipicolinate Reductase, domain 2"/>
    <property type="match status" value="1"/>
</dbReference>
<dbReference type="Gene3D" id="3.40.50.720">
    <property type="entry name" value="NAD(P)-binding Rossmann-like Domain"/>
    <property type="match status" value="1"/>
</dbReference>
<dbReference type="HAMAP" id="MF_01657">
    <property type="entry name" value="Ac_ald_DH_ac"/>
    <property type="match status" value="1"/>
</dbReference>
<dbReference type="InterPro" id="IPR003361">
    <property type="entry name" value="Acetaldehyde_dehydrogenase"/>
</dbReference>
<dbReference type="InterPro" id="IPR015426">
    <property type="entry name" value="Acetylaldehyde_DH_C"/>
</dbReference>
<dbReference type="InterPro" id="IPR036291">
    <property type="entry name" value="NAD(P)-bd_dom_sf"/>
</dbReference>
<dbReference type="InterPro" id="IPR000534">
    <property type="entry name" value="Semialdehyde_DH_NAD-bd"/>
</dbReference>
<dbReference type="NCBIfam" id="TIGR03215">
    <property type="entry name" value="ac_ald_DH_ac"/>
    <property type="match status" value="1"/>
</dbReference>
<dbReference type="NCBIfam" id="NF006157">
    <property type="entry name" value="PRK08300.1"/>
    <property type="match status" value="1"/>
</dbReference>
<dbReference type="Pfam" id="PF09290">
    <property type="entry name" value="AcetDehyd-dimer"/>
    <property type="match status" value="1"/>
</dbReference>
<dbReference type="PIRSF" id="PIRSF015689">
    <property type="entry name" value="Actaldh_dh_actl"/>
    <property type="match status" value="1"/>
</dbReference>
<dbReference type="SMART" id="SM00859">
    <property type="entry name" value="Semialdhyde_dh"/>
    <property type="match status" value="1"/>
</dbReference>
<dbReference type="SUPFAM" id="SSF55347">
    <property type="entry name" value="Glyceraldehyde-3-phosphate dehydrogenase-like, C-terminal domain"/>
    <property type="match status" value="1"/>
</dbReference>
<dbReference type="SUPFAM" id="SSF51735">
    <property type="entry name" value="NAD(P)-binding Rossmann-fold domains"/>
    <property type="match status" value="1"/>
</dbReference>
<keyword id="KW-0058">Aromatic hydrocarbons catabolism</keyword>
<keyword id="KW-0520">NAD</keyword>
<keyword id="KW-0560">Oxidoreductase</keyword>
<keyword id="KW-0614">Plasmid</keyword>
<keyword id="KW-1185">Reference proteome</keyword>
<protein>
    <recommendedName>
        <fullName evidence="1">Acetaldehyde dehydrogenase 2</fullName>
        <ecNumber evidence="1">1.2.1.10</ecNumber>
    </recommendedName>
    <alternativeName>
        <fullName evidence="1">Acetaldehyde dehydrogenase [acetylating] 2</fullName>
    </alternativeName>
</protein>
<gene>
    <name type="ordered locus">Saro_3853</name>
</gene>
<comment type="catalytic activity">
    <reaction evidence="1">
        <text>acetaldehyde + NAD(+) + CoA = acetyl-CoA + NADH + H(+)</text>
        <dbReference type="Rhea" id="RHEA:23288"/>
        <dbReference type="ChEBI" id="CHEBI:15343"/>
        <dbReference type="ChEBI" id="CHEBI:15378"/>
        <dbReference type="ChEBI" id="CHEBI:57287"/>
        <dbReference type="ChEBI" id="CHEBI:57288"/>
        <dbReference type="ChEBI" id="CHEBI:57540"/>
        <dbReference type="ChEBI" id="CHEBI:57945"/>
        <dbReference type="EC" id="1.2.1.10"/>
    </reaction>
</comment>
<comment type="similarity">
    <text evidence="1">Belongs to the acetaldehyde dehydrogenase family.</text>
</comment>
<sequence length="312" mass="32847">MAKMKCAIIGSGNIGTDLMIKLLKGSDTLELAAVVGIDPASEGLAMASERGVPTTHEGIEGLCRMPQYADIGIAFDATSAYAHKAHDEILARDGKLMVDLTPAAIGPATIPPVNPAVDAAVRNINMVTCGGQATIPIVAAVSQVAKVHYAEIVASVSSRSAGPGTRANIDEFTRTTARAIETVGGAAKGRAVIILNPAEPPMIMRDTIFTLSEMVDEDKVRDSVLAMIARVQSYVPGYRLKQEVQFERFGSNRPLKIPGYGEFEGLKTSVFLEVEGAGDYLPNYSGNLDIMTAAAKAAGESLAKTHMEKTAA</sequence>
<organism>
    <name type="scientific">Novosphingobium aromaticivorans (strain ATCC 700278 / DSM 12444 / CCUG 56034 / CIP 105152 / NBRC 16084 / F199)</name>
    <dbReference type="NCBI Taxonomy" id="279238"/>
    <lineage>
        <taxon>Bacteria</taxon>
        <taxon>Pseudomonadati</taxon>
        <taxon>Pseudomonadota</taxon>
        <taxon>Alphaproteobacteria</taxon>
        <taxon>Sphingomonadales</taxon>
        <taxon>Sphingomonadaceae</taxon>
        <taxon>Novosphingobium</taxon>
    </lineage>
</organism>
<accession>A4XDT7</accession>